<gene>
    <name evidence="1" type="primary">xerD</name>
    <name type="ordered locus">XAC3551</name>
</gene>
<name>XERD_XANAC</name>
<dbReference type="EMBL" id="AE008923">
    <property type="protein sequence ID" value="AAM38394.1"/>
    <property type="molecule type" value="Genomic_DNA"/>
</dbReference>
<dbReference type="SMR" id="Q8PGR5"/>
<dbReference type="KEGG" id="xac:XAC3551"/>
<dbReference type="eggNOG" id="COG4974">
    <property type="taxonomic scope" value="Bacteria"/>
</dbReference>
<dbReference type="HOGENOM" id="CLU_027562_9_0_6"/>
<dbReference type="Proteomes" id="UP000000576">
    <property type="component" value="Chromosome"/>
</dbReference>
<dbReference type="GO" id="GO:0005737">
    <property type="term" value="C:cytoplasm"/>
    <property type="evidence" value="ECO:0007669"/>
    <property type="project" value="UniProtKB-SubCell"/>
</dbReference>
<dbReference type="GO" id="GO:0003677">
    <property type="term" value="F:DNA binding"/>
    <property type="evidence" value="ECO:0007669"/>
    <property type="project" value="UniProtKB-KW"/>
</dbReference>
<dbReference type="GO" id="GO:0009037">
    <property type="term" value="F:tyrosine-based site-specific recombinase activity"/>
    <property type="evidence" value="ECO:0007669"/>
    <property type="project" value="UniProtKB-UniRule"/>
</dbReference>
<dbReference type="GO" id="GO:0051301">
    <property type="term" value="P:cell division"/>
    <property type="evidence" value="ECO:0007669"/>
    <property type="project" value="UniProtKB-KW"/>
</dbReference>
<dbReference type="GO" id="GO:0007059">
    <property type="term" value="P:chromosome segregation"/>
    <property type="evidence" value="ECO:0007669"/>
    <property type="project" value="UniProtKB-UniRule"/>
</dbReference>
<dbReference type="GO" id="GO:0006313">
    <property type="term" value="P:DNA transposition"/>
    <property type="evidence" value="ECO:0007669"/>
    <property type="project" value="UniProtKB-UniRule"/>
</dbReference>
<dbReference type="CDD" id="cd00798">
    <property type="entry name" value="INT_XerDC_C"/>
    <property type="match status" value="1"/>
</dbReference>
<dbReference type="Gene3D" id="1.10.150.130">
    <property type="match status" value="1"/>
</dbReference>
<dbReference type="Gene3D" id="1.10.443.10">
    <property type="entry name" value="Intergrase catalytic core"/>
    <property type="match status" value="1"/>
</dbReference>
<dbReference type="HAMAP" id="MF_01808">
    <property type="entry name" value="Recomb_XerC_XerD"/>
    <property type="match status" value="1"/>
</dbReference>
<dbReference type="HAMAP" id="MF_01807">
    <property type="entry name" value="Recomb_XerD"/>
    <property type="match status" value="1"/>
</dbReference>
<dbReference type="InterPro" id="IPR044068">
    <property type="entry name" value="CB"/>
</dbReference>
<dbReference type="InterPro" id="IPR011010">
    <property type="entry name" value="DNA_brk_join_enz"/>
</dbReference>
<dbReference type="InterPro" id="IPR013762">
    <property type="entry name" value="Integrase-like_cat_sf"/>
</dbReference>
<dbReference type="InterPro" id="IPR002104">
    <property type="entry name" value="Integrase_catalytic"/>
</dbReference>
<dbReference type="InterPro" id="IPR010998">
    <property type="entry name" value="Integrase_recombinase_N"/>
</dbReference>
<dbReference type="InterPro" id="IPR004107">
    <property type="entry name" value="Integrase_SAM-like_N"/>
</dbReference>
<dbReference type="InterPro" id="IPR011932">
    <property type="entry name" value="Recomb_XerD"/>
</dbReference>
<dbReference type="InterPro" id="IPR023009">
    <property type="entry name" value="Tyrosine_recombinase_XerC/XerD"/>
</dbReference>
<dbReference type="InterPro" id="IPR050090">
    <property type="entry name" value="Tyrosine_recombinase_XerCD"/>
</dbReference>
<dbReference type="NCBIfam" id="NF001399">
    <property type="entry name" value="PRK00283.1"/>
    <property type="match status" value="1"/>
</dbReference>
<dbReference type="NCBIfam" id="TIGR02225">
    <property type="entry name" value="recomb_XerD"/>
    <property type="match status" value="1"/>
</dbReference>
<dbReference type="PANTHER" id="PTHR30349">
    <property type="entry name" value="PHAGE INTEGRASE-RELATED"/>
    <property type="match status" value="1"/>
</dbReference>
<dbReference type="PANTHER" id="PTHR30349:SF90">
    <property type="entry name" value="TYROSINE RECOMBINASE XERD"/>
    <property type="match status" value="1"/>
</dbReference>
<dbReference type="Pfam" id="PF02899">
    <property type="entry name" value="Phage_int_SAM_1"/>
    <property type="match status" value="1"/>
</dbReference>
<dbReference type="Pfam" id="PF00589">
    <property type="entry name" value="Phage_integrase"/>
    <property type="match status" value="1"/>
</dbReference>
<dbReference type="SUPFAM" id="SSF56349">
    <property type="entry name" value="DNA breaking-rejoining enzymes"/>
    <property type="match status" value="1"/>
</dbReference>
<dbReference type="SUPFAM" id="SSF47823">
    <property type="entry name" value="lambda integrase-like, N-terminal domain"/>
    <property type="match status" value="1"/>
</dbReference>
<dbReference type="PROSITE" id="PS51900">
    <property type="entry name" value="CB"/>
    <property type="match status" value="1"/>
</dbReference>
<dbReference type="PROSITE" id="PS51898">
    <property type="entry name" value="TYR_RECOMBINASE"/>
    <property type="match status" value="1"/>
</dbReference>
<feature type="chain" id="PRO_0000095430" description="Tyrosine recombinase XerD">
    <location>
        <begin position="1"/>
        <end position="305"/>
    </location>
</feature>
<feature type="domain" description="Core-binding (CB)" evidence="3">
    <location>
        <begin position="3"/>
        <end position="88"/>
    </location>
</feature>
<feature type="domain" description="Tyr recombinase" evidence="2">
    <location>
        <begin position="109"/>
        <end position="299"/>
    </location>
</feature>
<feature type="active site" evidence="1">
    <location>
        <position position="149"/>
    </location>
</feature>
<feature type="active site" evidence="1">
    <location>
        <position position="173"/>
    </location>
</feature>
<feature type="active site" evidence="1">
    <location>
        <position position="251"/>
    </location>
</feature>
<feature type="active site" evidence="1">
    <location>
        <position position="254"/>
    </location>
</feature>
<feature type="active site" evidence="1">
    <location>
        <position position="277"/>
    </location>
</feature>
<feature type="active site" description="O-(3'-phospho-DNA)-tyrosine intermediate" evidence="1">
    <location>
        <position position="286"/>
    </location>
</feature>
<accession>Q8PGR5</accession>
<proteinExistence type="inferred from homology"/>
<protein>
    <recommendedName>
        <fullName evidence="1">Tyrosine recombinase XerD</fullName>
    </recommendedName>
</protein>
<organism>
    <name type="scientific">Xanthomonas axonopodis pv. citri (strain 306)</name>
    <dbReference type="NCBI Taxonomy" id="190486"/>
    <lineage>
        <taxon>Bacteria</taxon>
        <taxon>Pseudomonadati</taxon>
        <taxon>Pseudomonadota</taxon>
        <taxon>Gammaproteobacteria</taxon>
        <taxon>Lysobacterales</taxon>
        <taxon>Lysobacteraceae</taxon>
        <taxon>Xanthomonas</taxon>
    </lineage>
</organism>
<keyword id="KW-0131">Cell cycle</keyword>
<keyword id="KW-0132">Cell division</keyword>
<keyword id="KW-0159">Chromosome partition</keyword>
<keyword id="KW-0963">Cytoplasm</keyword>
<keyword id="KW-0229">DNA integration</keyword>
<keyword id="KW-0233">DNA recombination</keyword>
<keyword id="KW-0238">DNA-binding</keyword>
<sequence length="305" mass="33841">MQPADASVIERFLDRFWAEQGVARQTLESYRRDLEGLARWRDGAGGGLLGIDRAALFDYLRWRTRANYSPRSTARLLSTLRAFYGLCLRDGARSDDPTALIDPPHLPRSLPKALTESQIEALLAAPDLDTPAGLRDRAMLELMYAAGLRVSELVNLPAVGVNLRQGVLRVTGKGSKDRLVPLGEESQHWLERYLREARPLLAANKPVAAVDGQVPLFIDVSRQPLSRQQFWALVKRYAAVAGIDPATVSPHGLRHSFATHLLNHGADLRALQMLLGHSSLSTTQIYTLVARQHLQKLHASHHPRG</sequence>
<reference key="1">
    <citation type="journal article" date="2002" name="Nature">
        <title>Comparison of the genomes of two Xanthomonas pathogens with differing host specificities.</title>
        <authorList>
            <person name="da Silva A.C.R."/>
            <person name="Ferro J.A."/>
            <person name="Reinach F.C."/>
            <person name="Farah C.S."/>
            <person name="Furlan L.R."/>
            <person name="Quaggio R.B."/>
            <person name="Monteiro-Vitorello C.B."/>
            <person name="Van Sluys M.A."/>
            <person name="Almeida N.F. Jr."/>
            <person name="Alves L.M.C."/>
            <person name="do Amaral A.M."/>
            <person name="Bertolini M.C."/>
            <person name="Camargo L.E.A."/>
            <person name="Camarotte G."/>
            <person name="Cannavan F."/>
            <person name="Cardozo J."/>
            <person name="Chambergo F."/>
            <person name="Ciapina L.P."/>
            <person name="Cicarelli R.M.B."/>
            <person name="Coutinho L.L."/>
            <person name="Cursino-Santos J.R."/>
            <person name="El-Dorry H."/>
            <person name="Faria J.B."/>
            <person name="Ferreira A.J.S."/>
            <person name="Ferreira R.C.C."/>
            <person name="Ferro M.I.T."/>
            <person name="Formighieri E.F."/>
            <person name="Franco M.C."/>
            <person name="Greggio C.C."/>
            <person name="Gruber A."/>
            <person name="Katsuyama A.M."/>
            <person name="Kishi L.T."/>
            <person name="Leite R.P."/>
            <person name="Lemos E.G.M."/>
            <person name="Lemos M.V.F."/>
            <person name="Locali E.C."/>
            <person name="Machado M.A."/>
            <person name="Madeira A.M.B.N."/>
            <person name="Martinez-Rossi N.M."/>
            <person name="Martins E.C."/>
            <person name="Meidanis J."/>
            <person name="Menck C.F.M."/>
            <person name="Miyaki C.Y."/>
            <person name="Moon D.H."/>
            <person name="Moreira L.M."/>
            <person name="Novo M.T.M."/>
            <person name="Okura V.K."/>
            <person name="Oliveira M.C."/>
            <person name="Oliveira V.R."/>
            <person name="Pereira H.A."/>
            <person name="Rossi A."/>
            <person name="Sena J.A.D."/>
            <person name="Silva C."/>
            <person name="de Souza R.F."/>
            <person name="Spinola L.A.F."/>
            <person name="Takita M.A."/>
            <person name="Tamura R.E."/>
            <person name="Teixeira E.C."/>
            <person name="Tezza R.I.D."/>
            <person name="Trindade dos Santos M."/>
            <person name="Truffi D."/>
            <person name="Tsai S.M."/>
            <person name="White F.F."/>
            <person name="Setubal J.C."/>
            <person name="Kitajima J.P."/>
        </authorList>
    </citation>
    <scope>NUCLEOTIDE SEQUENCE [LARGE SCALE GENOMIC DNA]</scope>
    <source>
        <strain>306</strain>
    </source>
</reference>
<comment type="function">
    <text evidence="1">Site-specific tyrosine recombinase, which acts by catalyzing the cutting and rejoining of the recombining DNA molecules. The XerC-XerD complex is essential to convert dimers of the bacterial chromosome into monomers to permit their segregation at cell division. It also contributes to the segregational stability of plasmids.</text>
</comment>
<comment type="subunit">
    <text evidence="1">Forms a cyclic heterotetrameric complex composed of two molecules of XerC and two molecules of XerD.</text>
</comment>
<comment type="subcellular location">
    <subcellularLocation>
        <location evidence="1">Cytoplasm</location>
    </subcellularLocation>
</comment>
<comment type="similarity">
    <text evidence="1">Belongs to the 'phage' integrase family. XerD subfamily.</text>
</comment>
<evidence type="ECO:0000255" key="1">
    <source>
        <dbReference type="HAMAP-Rule" id="MF_01807"/>
    </source>
</evidence>
<evidence type="ECO:0000255" key="2">
    <source>
        <dbReference type="PROSITE-ProRule" id="PRU01246"/>
    </source>
</evidence>
<evidence type="ECO:0000255" key="3">
    <source>
        <dbReference type="PROSITE-ProRule" id="PRU01248"/>
    </source>
</evidence>